<organism>
    <name type="scientific">Rana temporaria</name>
    <name type="common">European common frog</name>
    <dbReference type="NCBI Taxonomy" id="8407"/>
    <lineage>
        <taxon>Eukaryota</taxon>
        <taxon>Metazoa</taxon>
        <taxon>Chordata</taxon>
        <taxon>Craniata</taxon>
        <taxon>Vertebrata</taxon>
        <taxon>Euteleostomi</taxon>
        <taxon>Amphibia</taxon>
        <taxon>Batrachia</taxon>
        <taxon>Anura</taxon>
        <taxon>Neobatrachia</taxon>
        <taxon>Ranoidea</taxon>
        <taxon>Ranidae</taxon>
        <taxon>Rana</taxon>
        <taxon>Rana</taxon>
    </lineage>
</organism>
<feature type="chain" id="PRO_0000197707" description="Rhodopsin">
    <location>
        <begin position="1"/>
        <end position="354"/>
    </location>
</feature>
<feature type="topological domain" description="Extracellular" evidence="6">
    <location>
        <begin position="1"/>
        <end position="36"/>
    </location>
</feature>
<feature type="transmembrane region" description="Helical; Name=1" evidence="1">
    <location>
        <begin position="37"/>
        <end position="61"/>
    </location>
</feature>
<feature type="topological domain" description="Cytoplasmic" evidence="6">
    <location>
        <begin position="62"/>
        <end position="73"/>
    </location>
</feature>
<feature type="transmembrane region" description="Helical; Name=2" evidence="1">
    <location>
        <begin position="74"/>
        <end position="96"/>
    </location>
</feature>
<feature type="topological domain" description="Extracellular" evidence="6">
    <location>
        <begin position="97"/>
        <end position="110"/>
    </location>
</feature>
<feature type="transmembrane region" description="Helical; Name=3" evidence="1">
    <location>
        <begin position="111"/>
        <end position="133"/>
    </location>
</feature>
<feature type="topological domain" description="Cytoplasmic" evidence="6">
    <location>
        <begin position="134"/>
        <end position="152"/>
    </location>
</feature>
<feature type="transmembrane region" description="Helical; Name=4" evidence="1">
    <location>
        <begin position="153"/>
        <end position="173"/>
    </location>
</feature>
<feature type="topological domain" description="Extracellular" evidence="6">
    <location>
        <begin position="174"/>
        <end position="202"/>
    </location>
</feature>
<feature type="transmembrane region" description="Helical; Name=5" evidence="1">
    <location>
        <begin position="203"/>
        <end position="224"/>
    </location>
</feature>
<feature type="topological domain" description="Cytoplasmic" evidence="6">
    <location>
        <begin position="225"/>
        <end position="252"/>
    </location>
</feature>
<feature type="transmembrane region" description="Helical; Name=6" evidence="1">
    <location>
        <begin position="253"/>
        <end position="274"/>
    </location>
</feature>
<feature type="topological domain" description="Extracellular" evidence="6">
    <location>
        <begin position="275"/>
        <end position="286"/>
    </location>
</feature>
<feature type="transmembrane region" description="Helical; Name=7" evidence="1">
    <location>
        <begin position="287"/>
        <end position="308"/>
    </location>
</feature>
<feature type="topological domain" description="Cytoplasmic" evidence="6">
    <location>
        <begin position="309"/>
        <end position="354"/>
    </location>
</feature>
<feature type="region of interest" description="Disordered" evidence="5">
    <location>
        <begin position="332"/>
        <end position="354"/>
    </location>
</feature>
<feature type="short sequence motif" description="'Ionic lock' involved in activated form stabilization" evidence="1">
    <location>
        <begin position="134"/>
        <end position="136"/>
    </location>
</feature>
<feature type="compositionally biased region" description="Low complexity" evidence="5">
    <location>
        <begin position="334"/>
        <end position="354"/>
    </location>
</feature>
<feature type="site" description="Plays an important role in the conformation switch to the active conformation" evidence="1">
    <location>
        <position position="113"/>
    </location>
</feature>
<feature type="modified residue" description="N6-(retinylidene)lysine" evidence="1">
    <location>
        <position position="296"/>
    </location>
</feature>
<feature type="lipid moiety-binding region" description="S-palmitoyl cysteine" evidence="1">
    <location>
        <position position="322"/>
    </location>
</feature>
<feature type="lipid moiety-binding region" description="S-palmitoyl cysteine" evidence="1">
    <location>
        <position position="323"/>
    </location>
</feature>
<feature type="glycosylation site" description="N-linked (GlcNAc...) asparagine" evidence="3">
    <location>
        <position position="2"/>
    </location>
</feature>
<feature type="glycosylation site" description="N-linked (GlcNAc...) asparagine" evidence="3">
    <location>
        <position position="15"/>
    </location>
</feature>
<feature type="disulfide bond" evidence="4">
    <location>
        <begin position="110"/>
        <end position="187"/>
    </location>
</feature>
<comment type="function">
    <text evidence="1 2">Photoreceptor required for image-forming vision at low light intensity. Required for photoreceptor cell viability after birth (By similarity). Light-induced isomerization of 11-cis to all-trans retinal triggers a conformational change that activates signaling via G-proteins. Subsequent receptor phosphorylation mediates displacement of the bound G-protein alpha subunit by arrestin and terminates signaling (By similarity).</text>
</comment>
<comment type="subcellular location">
    <subcellularLocation>
        <location evidence="2">Membrane</location>
        <topology evidence="2">Multi-pass membrane protein</topology>
    </subcellularLocation>
    <subcellularLocation>
        <location evidence="2">Cell projection</location>
        <location evidence="2">Cilium</location>
        <location evidence="2">Photoreceptor outer segment</location>
    </subcellularLocation>
    <text evidence="2">Synthesized in the inner segment (IS) of rod photoreceptor cells before vectorial transport to disk membranes in the rod outer segment (OS) photosensory cilia.</text>
</comment>
<comment type="PTM">
    <text evidence="1">Contains one covalently linked retinal chromophore. Upon light absorption, the covalently bound 11-cis-retinal is converted to all-trans-retinal. After hydrolysis of the Schiff base and release of the covalently bound all-trans-retinal, active rhodopsin is regenerated by binding of a fresh molecule of 11-cis-retinal.</text>
</comment>
<comment type="similarity">
    <text evidence="4">Belongs to the G-protein coupled receptor 1 family. Opsin subfamily.</text>
</comment>
<proteinExistence type="evidence at transcript level"/>
<dbReference type="EMBL" id="U59920">
    <property type="protein sequence ID" value="AAB93706.1"/>
    <property type="molecule type" value="mRNA"/>
</dbReference>
<dbReference type="RefSeq" id="XP_040214793.1">
    <property type="nucleotide sequence ID" value="XM_040358859.1"/>
</dbReference>
<dbReference type="SMR" id="P56516"/>
<dbReference type="GlyCosmos" id="P56516">
    <property type="glycosylation" value="2 sites, No reported glycans"/>
</dbReference>
<dbReference type="GeneID" id="120945030"/>
<dbReference type="OrthoDB" id="5962323at2759"/>
<dbReference type="GO" id="GO:0016020">
    <property type="term" value="C:membrane"/>
    <property type="evidence" value="ECO:0000250"/>
    <property type="project" value="UniProtKB"/>
</dbReference>
<dbReference type="GO" id="GO:0097381">
    <property type="term" value="C:photoreceptor disc membrane"/>
    <property type="evidence" value="ECO:0000250"/>
    <property type="project" value="UniProtKB"/>
</dbReference>
<dbReference type="GO" id="GO:0005886">
    <property type="term" value="C:plasma membrane"/>
    <property type="evidence" value="ECO:0000250"/>
    <property type="project" value="UniProtKB"/>
</dbReference>
<dbReference type="GO" id="GO:0005502">
    <property type="term" value="F:11-cis retinal binding"/>
    <property type="evidence" value="ECO:0000250"/>
    <property type="project" value="UniProtKB"/>
</dbReference>
<dbReference type="GO" id="GO:0008020">
    <property type="term" value="F:G protein-coupled photoreceptor activity"/>
    <property type="evidence" value="ECO:0000250"/>
    <property type="project" value="UniProtKB"/>
</dbReference>
<dbReference type="GO" id="GO:0016038">
    <property type="term" value="P:absorption of visible light"/>
    <property type="evidence" value="ECO:0000250"/>
    <property type="project" value="UniProtKB"/>
</dbReference>
<dbReference type="GO" id="GO:0016056">
    <property type="term" value="P:G protein-coupled opsin signaling pathway"/>
    <property type="evidence" value="ECO:0000250"/>
    <property type="project" value="UniProtKB"/>
</dbReference>
<dbReference type="GO" id="GO:0007601">
    <property type="term" value="P:visual perception"/>
    <property type="evidence" value="ECO:0007669"/>
    <property type="project" value="UniProtKB-KW"/>
</dbReference>
<dbReference type="CDD" id="cd15080">
    <property type="entry name" value="7tmA_MWS_opsin"/>
    <property type="match status" value="1"/>
</dbReference>
<dbReference type="FunFam" id="1.20.1070.10:FF:000018">
    <property type="entry name" value="Rhodopsin"/>
    <property type="match status" value="1"/>
</dbReference>
<dbReference type="Gene3D" id="1.20.1070.10">
    <property type="entry name" value="Rhodopsin 7-helix transmembrane proteins"/>
    <property type="match status" value="1"/>
</dbReference>
<dbReference type="InterPro" id="IPR050125">
    <property type="entry name" value="GPCR_opsins"/>
</dbReference>
<dbReference type="InterPro" id="IPR000276">
    <property type="entry name" value="GPCR_Rhodpsn"/>
</dbReference>
<dbReference type="InterPro" id="IPR017452">
    <property type="entry name" value="GPCR_Rhodpsn_7TM"/>
</dbReference>
<dbReference type="InterPro" id="IPR001760">
    <property type="entry name" value="Opsin"/>
</dbReference>
<dbReference type="InterPro" id="IPR027430">
    <property type="entry name" value="Retinal_BS"/>
</dbReference>
<dbReference type="InterPro" id="IPR000732">
    <property type="entry name" value="Rhodopsin"/>
</dbReference>
<dbReference type="InterPro" id="IPR019477">
    <property type="entry name" value="Rhodopsin_N"/>
</dbReference>
<dbReference type="PANTHER" id="PTHR24240">
    <property type="entry name" value="OPSIN"/>
    <property type="match status" value="1"/>
</dbReference>
<dbReference type="Pfam" id="PF00001">
    <property type="entry name" value="7tm_1"/>
    <property type="match status" value="1"/>
</dbReference>
<dbReference type="Pfam" id="PF10413">
    <property type="entry name" value="Rhodopsin_N"/>
    <property type="match status" value="1"/>
</dbReference>
<dbReference type="PRINTS" id="PR00237">
    <property type="entry name" value="GPCRRHODOPSN"/>
</dbReference>
<dbReference type="PRINTS" id="PR00238">
    <property type="entry name" value="OPSIN"/>
</dbReference>
<dbReference type="PRINTS" id="PR00579">
    <property type="entry name" value="RHODOPSIN"/>
</dbReference>
<dbReference type="SUPFAM" id="SSF81321">
    <property type="entry name" value="Family A G protein-coupled receptor-like"/>
    <property type="match status" value="1"/>
</dbReference>
<dbReference type="PROSITE" id="PS00237">
    <property type="entry name" value="G_PROTEIN_RECEP_F1_1"/>
    <property type="match status" value="1"/>
</dbReference>
<dbReference type="PROSITE" id="PS50262">
    <property type="entry name" value="G_PROTEIN_RECEP_F1_2"/>
    <property type="match status" value="1"/>
</dbReference>
<dbReference type="PROSITE" id="PS00238">
    <property type="entry name" value="OPSIN"/>
    <property type="match status" value="1"/>
</dbReference>
<gene>
    <name type="primary">RHO</name>
</gene>
<evidence type="ECO:0000250" key="1">
    <source>
        <dbReference type="UniProtKB" id="P02699"/>
    </source>
</evidence>
<evidence type="ECO:0000250" key="2">
    <source>
        <dbReference type="UniProtKB" id="P08100"/>
    </source>
</evidence>
<evidence type="ECO:0000255" key="3"/>
<evidence type="ECO:0000255" key="4">
    <source>
        <dbReference type="PROSITE-ProRule" id="PRU00521"/>
    </source>
</evidence>
<evidence type="ECO:0000256" key="5">
    <source>
        <dbReference type="SAM" id="MobiDB-lite"/>
    </source>
</evidence>
<evidence type="ECO:0000305" key="6"/>
<name>OPSD_RANTE</name>
<protein>
    <recommendedName>
        <fullName>Rhodopsin</fullName>
    </recommendedName>
</protein>
<reference key="1">
    <citation type="journal article" date="1998" name="Exp. Eye Res.">
        <title>Rhodopsins from three frog and toad species: sequences and functional comparisons.</title>
        <authorList>
            <person name="Fyhrquist N."/>
            <person name="Donner K."/>
            <person name="Hargrave P.A."/>
            <person name="McDowell J.H."/>
            <person name="Popp M.P."/>
            <person name="Smith W.C."/>
        </authorList>
    </citation>
    <scope>NUCLEOTIDE SEQUENCE [MRNA]</scope>
</reference>
<accession>P56516</accession>
<sequence>MNGTEGPNFYIPMSNKTGVVRSPFEYPQYYLAEPWKYSILAAYMFLLILLGFPINFMTLYVTIQHKKLRTPLNYILLNLAFANHFMVLCGFTITLYTSLHGYFVFGQSGCYFEGFFATLGGEIALWSLVALAIERYIVVCKPMSNFRFGENHAMMGVAFTWIMALACAVPPLFGWSRYIPEGMQCSCGVDYYTLKPEINNESFVIYMFVVHFLIPLIIITFCYGRLVCTVKEAAAQQQESATTQKAEKEVTRMVIIMVIFFLICWVPYAYVAFYIFCNQGSEFGPIFMTVPAFFAKSSAIYNPVIYIMLNKQFRNCMITTLCCGKNPFGDDDASSAATSKTEATSVSTSQVSPA</sequence>
<keyword id="KW-0966">Cell projection</keyword>
<keyword id="KW-0157">Chromophore</keyword>
<keyword id="KW-1015">Disulfide bond</keyword>
<keyword id="KW-0297">G-protein coupled receptor</keyword>
<keyword id="KW-0325">Glycoprotein</keyword>
<keyword id="KW-0449">Lipoprotein</keyword>
<keyword id="KW-0472">Membrane</keyword>
<keyword id="KW-0564">Palmitate</keyword>
<keyword id="KW-0597">Phosphoprotein</keyword>
<keyword id="KW-0600">Photoreceptor protein</keyword>
<keyword id="KW-0675">Receptor</keyword>
<keyword id="KW-0681">Retinal protein</keyword>
<keyword id="KW-0716">Sensory transduction</keyword>
<keyword id="KW-0807">Transducer</keyword>
<keyword id="KW-0812">Transmembrane</keyword>
<keyword id="KW-1133">Transmembrane helix</keyword>
<keyword id="KW-0844">Vision</keyword>